<organism>
    <name type="scientific">Acidianus bottle-shaped virus (isolate Italy/Pozzuoli)</name>
    <name type="common">ABV</name>
    <dbReference type="NCBI Taxonomy" id="654911"/>
    <lineage>
        <taxon>Viruses</taxon>
        <taxon>Viruses incertae sedis</taxon>
        <taxon>Ampullaviridae</taxon>
        <taxon>Bottigliavirus</taxon>
        <taxon>Bottigliavirus ABV</taxon>
    </lineage>
</organism>
<accession>A4ZUB4</accession>
<reference key="1">
    <citation type="journal article" date="2007" name="Virology">
        <title>Genome of the Acidianus bottle-shaped virus and insights into the replication and packaging mechanisms.</title>
        <authorList>
            <person name="Peng X."/>
            <person name="Basta T."/>
            <person name="Haring M."/>
            <person name="Garrett R.A."/>
            <person name="Prangishvili D."/>
        </authorList>
    </citation>
    <scope>NUCLEOTIDE SEQUENCE [GENOMIC DNA]</scope>
</reference>
<organismHost>
    <name type="scientific">Acidianus convivator</name>
    <dbReference type="NCBI Taxonomy" id="269667"/>
</organismHost>
<feature type="chain" id="PRO_0000384853" description="Putative transmembrane protein ORF116">
    <location>
        <begin position="1"/>
        <end position="116"/>
    </location>
</feature>
<feature type="transmembrane region" description="Helical" evidence="1">
    <location>
        <begin position="20"/>
        <end position="40"/>
    </location>
</feature>
<feature type="transmembrane region" description="Helical" evidence="1">
    <location>
        <begin position="53"/>
        <end position="73"/>
    </location>
</feature>
<feature type="transmembrane region" description="Helical" evidence="1">
    <location>
        <begin position="76"/>
        <end position="96"/>
    </location>
</feature>
<gene>
    <name type="ORF">ORF116</name>
</gene>
<dbReference type="EMBL" id="EF432053">
    <property type="protein sequence ID" value="ABP73418.1"/>
    <property type="molecule type" value="Genomic_DNA"/>
</dbReference>
<dbReference type="RefSeq" id="YP_001210332.1">
    <property type="nucleotide sequence ID" value="NC_009452.1"/>
</dbReference>
<dbReference type="GeneID" id="5129807"/>
<dbReference type="KEGG" id="vg:5129807"/>
<dbReference type="Proteomes" id="UP000000513">
    <property type="component" value="Segment"/>
</dbReference>
<dbReference type="GO" id="GO:0033644">
    <property type="term" value="C:host cell membrane"/>
    <property type="evidence" value="ECO:0007669"/>
    <property type="project" value="UniProtKB-SubCell"/>
</dbReference>
<dbReference type="GO" id="GO:0016020">
    <property type="term" value="C:membrane"/>
    <property type="evidence" value="ECO:0007669"/>
    <property type="project" value="UniProtKB-KW"/>
</dbReference>
<keyword id="KW-1043">Host membrane</keyword>
<keyword id="KW-0472">Membrane</keyword>
<keyword id="KW-1185">Reference proteome</keyword>
<keyword id="KW-0812">Transmembrane</keyword>
<keyword id="KW-1133">Transmembrane helix</keyword>
<comment type="subcellular location">
    <subcellularLocation>
        <location evidence="2">Host membrane</location>
        <topology evidence="2">Multi-pass membrane protein</topology>
    </subcellularLocation>
</comment>
<evidence type="ECO:0000255" key="1"/>
<evidence type="ECO:0000305" key="2"/>
<name>Y116_ABVP</name>
<proteinExistence type="predicted"/>
<protein>
    <recommendedName>
        <fullName>Putative transmembrane protein ORF116</fullName>
    </recommendedName>
</protein>
<sequence>MEYVEPLAPLYGGEYSTTGIVTLSVGIALLVLANAFAYALVKAFGIQSYYGRLLGGIVLLVLSMLLTLSTNSINKFRGAFTFAIGEIIIGGLDVINDKSGWSQPVVSPTVGCQGGA</sequence>